<gene>
    <name evidence="1" type="primary">secD</name>
    <name type="ordered locus">Pro_0767</name>
</gene>
<dbReference type="EMBL" id="AE017126">
    <property type="protein sequence ID" value="AAP99811.1"/>
    <property type="molecule type" value="Genomic_DNA"/>
</dbReference>
<dbReference type="RefSeq" id="NP_875159.1">
    <property type="nucleotide sequence ID" value="NC_005042.1"/>
</dbReference>
<dbReference type="RefSeq" id="WP_011124919.1">
    <property type="nucleotide sequence ID" value="NC_005042.1"/>
</dbReference>
<dbReference type="SMR" id="Q7VCH3"/>
<dbReference type="STRING" id="167539.Pro_0767"/>
<dbReference type="EnsemblBacteria" id="AAP99811">
    <property type="protein sequence ID" value="AAP99811"/>
    <property type="gene ID" value="Pro_0767"/>
</dbReference>
<dbReference type="KEGG" id="pma:Pro_0767"/>
<dbReference type="PATRIC" id="fig|167539.5.peg.812"/>
<dbReference type="eggNOG" id="COG0342">
    <property type="taxonomic scope" value="Bacteria"/>
</dbReference>
<dbReference type="HOGENOM" id="CLU_007894_4_2_3"/>
<dbReference type="OrthoDB" id="9805019at2"/>
<dbReference type="Proteomes" id="UP000001420">
    <property type="component" value="Chromosome"/>
</dbReference>
<dbReference type="GO" id="GO:0005886">
    <property type="term" value="C:plasma membrane"/>
    <property type="evidence" value="ECO:0007669"/>
    <property type="project" value="UniProtKB-SubCell"/>
</dbReference>
<dbReference type="GO" id="GO:0015450">
    <property type="term" value="F:protein-transporting ATPase activity"/>
    <property type="evidence" value="ECO:0007669"/>
    <property type="project" value="InterPro"/>
</dbReference>
<dbReference type="GO" id="GO:0065002">
    <property type="term" value="P:intracellular protein transmembrane transport"/>
    <property type="evidence" value="ECO:0007669"/>
    <property type="project" value="UniProtKB-UniRule"/>
</dbReference>
<dbReference type="GO" id="GO:0006605">
    <property type="term" value="P:protein targeting"/>
    <property type="evidence" value="ECO:0007669"/>
    <property type="project" value="UniProtKB-UniRule"/>
</dbReference>
<dbReference type="GO" id="GO:0043952">
    <property type="term" value="P:protein transport by the Sec complex"/>
    <property type="evidence" value="ECO:0007669"/>
    <property type="project" value="UniProtKB-UniRule"/>
</dbReference>
<dbReference type="FunFam" id="1.20.1640.10:FF:000004">
    <property type="entry name" value="Protein translocase subunit SecD"/>
    <property type="match status" value="1"/>
</dbReference>
<dbReference type="Gene3D" id="3.30.1360.200">
    <property type="match status" value="1"/>
</dbReference>
<dbReference type="Gene3D" id="3.30.70.3400">
    <property type="match status" value="1"/>
</dbReference>
<dbReference type="Gene3D" id="1.20.1640.10">
    <property type="entry name" value="Multidrug efflux transporter AcrB transmembrane domain"/>
    <property type="match status" value="1"/>
</dbReference>
<dbReference type="HAMAP" id="MF_01463_B">
    <property type="entry name" value="SecD_B"/>
    <property type="match status" value="1"/>
</dbReference>
<dbReference type="InterPro" id="IPR001036">
    <property type="entry name" value="Acrflvin-R"/>
</dbReference>
<dbReference type="InterPro" id="IPR005791">
    <property type="entry name" value="SecD"/>
</dbReference>
<dbReference type="InterPro" id="IPR022813">
    <property type="entry name" value="SecD/SecF_arch_bac"/>
</dbReference>
<dbReference type="InterPro" id="IPR022646">
    <property type="entry name" value="SecD/SecF_CS"/>
</dbReference>
<dbReference type="InterPro" id="IPR048631">
    <property type="entry name" value="SecD_1st"/>
</dbReference>
<dbReference type="InterPro" id="IPR048634">
    <property type="entry name" value="SecD_SecF_C"/>
</dbReference>
<dbReference type="InterPro" id="IPR055344">
    <property type="entry name" value="SecD_SecF_C_bact"/>
</dbReference>
<dbReference type="InterPro" id="IPR054384">
    <property type="entry name" value="SecDF_P1_head"/>
</dbReference>
<dbReference type="NCBIfam" id="TIGR00916">
    <property type="entry name" value="2A0604s01"/>
    <property type="match status" value="1"/>
</dbReference>
<dbReference type="NCBIfam" id="TIGR01129">
    <property type="entry name" value="secD"/>
    <property type="match status" value="1"/>
</dbReference>
<dbReference type="PANTHER" id="PTHR30081:SF1">
    <property type="entry name" value="PROTEIN TRANSLOCASE SUBUNIT SECD"/>
    <property type="match status" value="1"/>
</dbReference>
<dbReference type="PANTHER" id="PTHR30081">
    <property type="entry name" value="PROTEIN-EXPORT MEMBRANE PROTEIN SEC"/>
    <property type="match status" value="1"/>
</dbReference>
<dbReference type="Pfam" id="PF07549">
    <property type="entry name" value="Sec_GG"/>
    <property type="match status" value="1"/>
</dbReference>
<dbReference type="Pfam" id="PF21760">
    <property type="entry name" value="SecD_1st"/>
    <property type="match status" value="1"/>
</dbReference>
<dbReference type="Pfam" id="PF02355">
    <property type="entry name" value="SecD_SecF_C"/>
    <property type="match status" value="1"/>
</dbReference>
<dbReference type="Pfam" id="PF22599">
    <property type="entry name" value="SecDF_P1_head"/>
    <property type="match status" value="1"/>
</dbReference>
<dbReference type="PRINTS" id="PR00702">
    <property type="entry name" value="ACRIFLAVINRP"/>
</dbReference>
<dbReference type="SUPFAM" id="SSF82866">
    <property type="entry name" value="Multidrug efflux transporter AcrB transmembrane domain"/>
    <property type="match status" value="1"/>
</dbReference>
<proteinExistence type="inferred from homology"/>
<keyword id="KW-0997">Cell inner membrane</keyword>
<keyword id="KW-1003">Cell membrane</keyword>
<keyword id="KW-0472">Membrane</keyword>
<keyword id="KW-0653">Protein transport</keyword>
<keyword id="KW-1185">Reference proteome</keyword>
<keyword id="KW-0811">Translocation</keyword>
<keyword id="KW-0812">Transmembrane</keyword>
<keyword id="KW-1133">Transmembrane helix</keyword>
<keyword id="KW-0813">Transport</keyword>
<sequence length="494" mass="53851">MARQQGWFALLIALVISAFLLCINLPFQLGLDLRGGSQLTLEVQALNPNEQIKSEQLEAVQSVLDRRVNGLGVAESSLRTIGTNQLILELPGEQEPSKAARVLGKTALLEFRKQKINTKSEMQRLQRIRSQVNNIDLYKKASKDNKSELIENKKIGEQVNDLRVALGLANSSLNEHDQIDQIRQKVNSEIVELFEPSSLTGSDLVSAGRRQEQNLTSWEVTLAFNQDGGEKFASLTKSIAGSDRLLGIILDGESISEASVGEQFKVAGITGGSATISGNFTAESARELEVQLRGGSLPLPVSIVQVRTIGPTLGVDNIRRSLIAALLGLSLVAIFMVSFYRLAGFIAIFALSFYALFNIAIYALIPVTLTLPGVAGFVLSIGMAVDANVLIFERVKDELRRGNTLIRSIETGFSQAFSSIIDGHITTLISCISLFYLGTGFVKGFAATLGIGVFISLFTALSCTRVLLRFFMSYKSLRKTTNFLSENQLPKQLT</sequence>
<feature type="chain" id="PRO_0000412681" description="Protein translocase subunit SecD">
    <location>
        <begin position="1"/>
        <end position="494"/>
    </location>
</feature>
<feature type="transmembrane region" description="Helical" evidence="1">
    <location>
        <begin position="7"/>
        <end position="27"/>
    </location>
</feature>
<feature type="transmembrane region" description="Helical" evidence="1">
    <location>
        <begin position="322"/>
        <end position="342"/>
    </location>
</feature>
<feature type="transmembrane region" description="Helical" evidence="1">
    <location>
        <begin position="345"/>
        <end position="365"/>
    </location>
</feature>
<feature type="transmembrane region" description="Helical" evidence="1">
    <location>
        <begin position="372"/>
        <end position="392"/>
    </location>
</feature>
<feature type="transmembrane region" description="Helical" evidence="1">
    <location>
        <begin position="420"/>
        <end position="440"/>
    </location>
</feature>
<feature type="transmembrane region" description="Helical" evidence="1">
    <location>
        <begin position="441"/>
        <end position="461"/>
    </location>
</feature>
<organism>
    <name type="scientific">Prochlorococcus marinus (strain SARG / CCMP1375 / SS120)</name>
    <dbReference type="NCBI Taxonomy" id="167539"/>
    <lineage>
        <taxon>Bacteria</taxon>
        <taxon>Bacillati</taxon>
        <taxon>Cyanobacteriota</taxon>
        <taxon>Cyanophyceae</taxon>
        <taxon>Synechococcales</taxon>
        <taxon>Prochlorococcaceae</taxon>
        <taxon>Prochlorococcus</taxon>
    </lineage>
</organism>
<reference key="1">
    <citation type="journal article" date="2003" name="Proc. Natl. Acad. Sci. U.S.A.">
        <title>Genome sequence of the cyanobacterium Prochlorococcus marinus SS120, a nearly minimal oxyphototrophic genome.</title>
        <authorList>
            <person name="Dufresne A."/>
            <person name="Salanoubat M."/>
            <person name="Partensky F."/>
            <person name="Artiguenave F."/>
            <person name="Axmann I.M."/>
            <person name="Barbe V."/>
            <person name="Duprat S."/>
            <person name="Galperin M.Y."/>
            <person name="Koonin E.V."/>
            <person name="Le Gall F."/>
            <person name="Makarova K.S."/>
            <person name="Ostrowski M."/>
            <person name="Oztas S."/>
            <person name="Robert C."/>
            <person name="Rogozin I.B."/>
            <person name="Scanlan D.J."/>
            <person name="Tandeau de Marsac N."/>
            <person name="Weissenbach J."/>
            <person name="Wincker P."/>
            <person name="Wolf Y.I."/>
            <person name="Hess W.R."/>
        </authorList>
    </citation>
    <scope>NUCLEOTIDE SEQUENCE [LARGE SCALE GENOMIC DNA]</scope>
    <source>
        <strain>SARG / CCMP1375 / SS120</strain>
    </source>
</reference>
<protein>
    <recommendedName>
        <fullName evidence="1">Protein translocase subunit SecD</fullName>
    </recommendedName>
</protein>
<name>SECD_PROMA</name>
<comment type="function">
    <text evidence="1">Part of the Sec protein translocase complex. Interacts with the SecYEG preprotein conducting channel. SecDF uses the proton motive force (PMF) to complete protein translocation after the ATP-dependent function of SecA.</text>
</comment>
<comment type="function">
    <text evidence="1">Probably participates in protein translocation into and across both the cytoplasmic and thylakoid membranes in cyanobacterial cells.</text>
</comment>
<comment type="subunit">
    <text evidence="1">Forms a complex with SecF. Part of the essential Sec protein translocation apparatus which comprises SecA, SecYEG and auxiliary proteins SecDF. Other proteins may also be involved.</text>
</comment>
<comment type="subcellular location">
    <subcellularLocation>
        <location evidence="1">Cell inner membrane</location>
        <topology evidence="1">Multi-pass membrane protein</topology>
    </subcellularLocation>
</comment>
<comment type="similarity">
    <text evidence="1">Belongs to the SecD/SecF family. SecD subfamily.</text>
</comment>
<accession>Q7VCH3</accession>
<evidence type="ECO:0000255" key="1">
    <source>
        <dbReference type="HAMAP-Rule" id="MF_01463"/>
    </source>
</evidence>